<reference key="1">
    <citation type="journal article" date="2004" name="Nature">
        <title>Sequence and comparative analysis of the chicken genome provide unique perspectives on vertebrate evolution.</title>
        <authorList>
            <person name="Hillier L.W."/>
            <person name="Miller W."/>
            <person name="Birney E."/>
            <person name="Warren W."/>
            <person name="Hardison R.C."/>
            <person name="Ponting C.P."/>
            <person name="Bork P."/>
            <person name="Burt D.W."/>
            <person name="Groenen M.A.M."/>
            <person name="Delany M.E."/>
            <person name="Dodgson J.B."/>
            <person name="Chinwalla A.T."/>
            <person name="Cliften P.F."/>
            <person name="Clifton S.W."/>
            <person name="Delehaunty K.D."/>
            <person name="Fronick C."/>
            <person name="Fulton R.S."/>
            <person name="Graves T.A."/>
            <person name="Kremitzki C."/>
            <person name="Layman D."/>
            <person name="Magrini V."/>
            <person name="McPherson J.D."/>
            <person name="Miner T.L."/>
            <person name="Minx P."/>
            <person name="Nash W.E."/>
            <person name="Nhan M.N."/>
            <person name="Nelson J.O."/>
            <person name="Oddy L.G."/>
            <person name="Pohl C.S."/>
            <person name="Randall-Maher J."/>
            <person name="Smith S.M."/>
            <person name="Wallis J.W."/>
            <person name="Yang S.-P."/>
            <person name="Romanov M.N."/>
            <person name="Rondelli C.M."/>
            <person name="Paton B."/>
            <person name="Smith J."/>
            <person name="Morrice D."/>
            <person name="Daniels L."/>
            <person name="Tempest H.G."/>
            <person name="Robertson L."/>
            <person name="Masabanda J.S."/>
            <person name="Griffin D.K."/>
            <person name="Vignal A."/>
            <person name="Fillon V."/>
            <person name="Jacobbson L."/>
            <person name="Kerje S."/>
            <person name="Andersson L."/>
            <person name="Crooijmans R.P."/>
            <person name="Aerts J."/>
            <person name="van der Poel J.J."/>
            <person name="Ellegren H."/>
            <person name="Caldwell R.B."/>
            <person name="Hubbard S.J."/>
            <person name="Grafham D.V."/>
            <person name="Kierzek A.M."/>
            <person name="McLaren S.R."/>
            <person name="Overton I.M."/>
            <person name="Arakawa H."/>
            <person name="Beattie K.J."/>
            <person name="Bezzubov Y."/>
            <person name="Boardman P.E."/>
            <person name="Bonfield J.K."/>
            <person name="Croning M.D.R."/>
            <person name="Davies R.M."/>
            <person name="Francis M.D."/>
            <person name="Humphray S.J."/>
            <person name="Scott C.E."/>
            <person name="Taylor R.G."/>
            <person name="Tickle C."/>
            <person name="Brown W.R.A."/>
            <person name="Rogers J."/>
            <person name="Buerstedde J.-M."/>
            <person name="Wilson S.A."/>
            <person name="Stubbs L."/>
            <person name="Ovcharenko I."/>
            <person name="Gordon L."/>
            <person name="Lucas S."/>
            <person name="Miller M.M."/>
            <person name="Inoko H."/>
            <person name="Shiina T."/>
            <person name="Kaufman J."/>
            <person name="Salomonsen J."/>
            <person name="Skjoedt K."/>
            <person name="Wong G.K.-S."/>
            <person name="Wang J."/>
            <person name="Liu B."/>
            <person name="Wang J."/>
            <person name="Yu J."/>
            <person name="Yang H."/>
            <person name="Nefedov M."/>
            <person name="Koriabine M."/>
            <person name="Dejong P.J."/>
            <person name="Goodstadt L."/>
            <person name="Webber C."/>
            <person name="Dickens N.J."/>
            <person name="Letunic I."/>
            <person name="Suyama M."/>
            <person name="Torrents D."/>
            <person name="von Mering C."/>
            <person name="Zdobnov E.M."/>
            <person name="Makova K."/>
            <person name="Nekrutenko A."/>
            <person name="Elnitski L."/>
            <person name="Eswara P."/>
            <person name="King D.C."/>
            <person name="Yang S.-P."/>
            <person name="Tyekucheva S."/>
            <person name="Radakrishnan A."/>
            <person name="Harris R.S."/>
            <person name="Chiaromonte F."/>
            <person name="Taylor J."/>
            <person name="He J."/>
            <person name="Rijnkels M."/>
            <person name="Griffiths-Jones S."/>
            <person name="Ureta-Vidal A."/>
            <person name="Hoffman M.M."/>
            <person name="Severin J."/>
            <person name="Searle S.M.J."/>
            <person name="Law A.S."/>
            <person name="Speed D."/>
            <person name="Waddington D."/>
            <person name="Cheng Z."/>
            <person name="Tuzun E."/>
            <person name="Eichler E."/>
            <person name="Bao Z."/>
            <person name="Flicek P."/>
            <person name="Shteynberg D.D."/>
            <person name="Brent M.R."/>
            <person name="Bye J.M."/>
            <person name="Huckle E.J."/>
            <person name="Chatterji S."/>
            <person name="Dewey C."/>
            <person name="Pachter L."/>
            <person name="Kouranov A."/>
            <person name="Mourelatos Z."/>
            <person name="Hatzigeorgiou A.G."/>
            <person name="Paterson A.H."/>
            <person name="Ivarie R."/>
            <person name="Brandstrom M."/>
            <person name="Axelsson E."/>
            <person name="Backstrom N."/>
            <person name="Berlin S."/>
            <person name="Webster M.T."/>
            <person name="Pourquie O."/>
            <person name="Reymond A."/>
            <person name="Ucla C."/>
            <person name="Antonarakis S.E."/>
            <person name="Long M."/>
            <person name="Emerson J.J."/>
            <person name="Betran E."/>
            <person name="Dupanloup I."/>
            <person name="Kaessmann H."/>
            <person name="Hinrichs A.S."/>
            <person name="Bejerano G."/>
            <person name="Furey T.S."/>
            <person name="Harte R.A."/>
            <person name="Raney B."/>
            <person name="Siepel A."/>
            <person name="Kent W.J."/>
            <person name="Haussler D."/>
            <person name="Eyras E."/>
            <person name="Castelo R."/>
            <person name="Abril J.F."/>
            <person name="Castellano S."/>
            <person name="Camara F."/>
            <person name="Parra G."/>
            <person name="Guigo R."/>
            <person name="Bourque G."/>
            <person name="Tesler G."/>
            <person name="Pevzner P.A."/>
            <person name="Smit A."/>
            <person name="Fulton L.A."/>
            <person name="Mardis E.R."/>
            <person name="Wilson R.K."/>
        </authorList>
    </citation>
    <scope>NUCLEOTIDE SEQUENCE [LARGE SCALE GENOMIC DNA]</scope>
    <source>
        <strain>Red jungle fowl</strain>
    </source>
</reference>
<reference key="2">
    <citation type="journal article" date="1988" name="Mol. Endocrinol.">
        <title>Complementary deoxyribonucleic acid cloning of a messenger ribonucleic acid encoding transforming growth factor beta 4 from chicken embryo chondrocytes.</title>
        <authorList>
            <person name="Jakowlew S.B."/>
            <person name="Dillard P.J."/>
            <person name="Sporn M.B."/>
            <person name="Roberts A.B."/>
        </authorList>
    </citation>
    <scope>NUCLEOTIDE SEQUENCE [MRNA] OF 18-391</scope>
    <source>
        <strain>White leghorn</strain>
    </source>
</reference>
<reference key="3">
    <citation type="journal article" date="1992" name="Mol. Endocrinol.">
        <title>Correction: a new interpretation of a chicken transforming growth factor-beta 4 complementary DNA.</title>
        <authorList>
            <person name="Burt D.W."/>
            <person name="Jakowlew S.B."/>
        </authorList>
    </citation>
    <scope>SEQUENCE REVISION</scope>
</reference>
<feature type="signal peptide" evidence="4">
    <location>
        <begin position="1"/>
        <end position="18"/>
    </location>
</feature>
<feature type="chain" id="PRO_0000033774" description="Latency-associated peptide" evidence="1">
    <location>
        <begin position="19"/>
        <end position="277"/>
    </location>
</feature>
<feature type="chain" id="PRO_0000033775" description="Transforming growth factor beta-1" evidence="1">
    <location>
        <begin position="278"/>
        <end position="391"/>
    </location>
</feature>
<feature type="region of interest" description="Straightjacket domain" evidence="3">
    <location>
        <begin position="19"/>
        <end position="63"/>
    </location>
</feature>
<feature type="region of interest" description="Arm domain" evidence="3">
    <location>
        <begin position="64"/>
        <end position="270"/>
    </location>
</feature>
<feature type="region of interest" description="Bowtie tail" evidence="1">
    <location>
        <begin position="221"/>
        <end position="249"/>
    </location>
</feature>
<feature type="short sequence motif" description="Cell attachment site" evidence="4">
    <location>
        <begin position="241"/>
        <end position="243"/>
    </location>
</feature>
<feature type="glycosylation site" description="N-linked (GlcNAc...) asparagine" evidence="4">
    <location>
        <position position="71"/>
    </location>
</feature>
<feature type="glycosylation site" description="N-linked (GlcNAc...) asparagine" evidence="4">
    <location>
        <position position="126"/>
    </location>
</feature>
<feature type="glycosylation site" description="N-linked (GlcNAc...) asparagine" evidence="4">
    <location>
        <position position="171"/>
    </location>
</feature>
<feature type="disulfide bond" description="Interchain (with C-? in LTBP1 TB3 domain); in inactive form" evidence="3">
    <location>
        <position position="22"/>
    </location>
</feature>
<feature type="disulfide bond" description="Interchain (with C-220)" evidence="1">
    <location>
        <position position="218"/>
    </location>
</feature>
<feature type="disulfide bond" description="Interchain (with C-218)" evidence="1">
    <location>
        <position position="220"/>
    </location>
</feature>
<feature type="disulfide bond" evidence="1">
    <location>
        <begin position="284"/>
        <end position="295"/>
    </location>
</feature>
<feature type="disulfide bond" evidence="1">
    <location>
        <begin position="294"/>
        <end position="357"/>
    </location>
</feature>
<feature type="disulfide bond" evidence="1">
    <location>
        <begin position="323"/>
        <end position="388"/>
    </location>
</feature>
<feature type="disulfide bond" evidence="1">
    <location>
        <begin position="327"/>
        <end position="390"/>
    </location>
</feature>
<feature type="disulfide bond" description="Interchain" evidence="1">
    <location>
        <position position="356"/>
    </location>
</feature>
<feature type="sequence conflict" description="In Ref. 2; AAB05637." ref="2">
    <original>P</original>
    <variation>A</variation>
    <location>
        <position position="110"/>
    </location>
</feature>
<feature type="sequence conflict" description="In Ref. 2; AAB05637." ref="2">
    <original>VRAEVGGRA</original>
    <variation>ARRGGRPT</variation>
    <location>
        <begin position="130"/>
        <end position="138"/>
    </location>
</feature>
<feature type="sequence conflict" description="In Ref. 2; AAB05637." ref="2">
    <original>D</original>
    <variation>E</variation>
    <location>
        <position position="228"/>
    </location>
</feature>
<evidence type="ECO:0000250" key="1">
    <source>
        <dbReference type="UniProtKB" id="P01137"/>
    </source>
</evidence>
<evidence type="ECO:0000250" key="2">
    <source>
        <dbReference type="UniProtKB" id="P04202"/>
    </source>
</evidence>
<evidence type="ECO:0000250" key="3">
    <source>
        <dbReference type="UniProtKB" id="P07200"/>
    </source>
</evidence>
<evidence type="ECO:0000255" key="4"/>
<evidence type="ECO:0000305" key="5"/>
<dbReference type="EMBL" id="M31160">
    <property type="protein sequence ID" value="AAB05637.1"/>
    <property type="molecule type" value="mRNA"/>
</dbReference>
<dbReference type="PIR" id="A41918">
    <property type="entry name" value="A41918"/>
</dbReference>
<dbReference type="SMR" id="P09531"/>
<dbReference type="FunCoup" id="P09531">
    <property type="interactions" value="114"/>
</dbReference>
<dbReference type="STRING" id="9031.ENSGALP00000053940"/>
<dbReference type="GlyCosmos" id="P09531">
    <property type="glycosylation" value="3 sites, No reported glycans"/>
</dbReference>
<dbReference type="GlyGen" id="P09531">
    <property type="glycosylation" value="3 sites"/>
</dbReference>
<dbReference type="VEuPathDB" id="HostDB:geneid_100873157"/>
<dbReference type="InParanoid" id="P09531"/>
<dbReference type="OrthoDB" id="8863549at2759"/>
<dbReference type="PhylomeDB" id="P09531"/>
<dbReference type="Proteomes" id="UP000000539">
    <property type="component" value="Unassembled WGS sequence"/>
</dbReference>
<dbReference type="GO" id="GO:0005615">
    <property type="term" value="C:extracellular space"/>
    <property type="evidence" value="ECO:0000318"/>
    <property type="project" value="GO_Central"/>
</dbReference>
<dbReference type="GO" id="GO:0005125">
    <property type="term" value="F:cytokine activity"/>
    <property type="evidence" value="ECO:0000318"/>
    <property type="project" value="GO_Central"/>
</dbReference>
<dbReference type="GO" id="GO:0008083">
    <property type="term" value="F:growth factor activity"/>
    <property type="evidence" value="ECO:0007669"/>
    <property type="project" value="UniProtKB-KW"/>
</dbReference>
<dbReference type="GO" id="GO:0005160">
    <property type="term" value="F:transforming growth factor beta receptor binding"/>
    <property type="evidence" value="ECO:0007669"/>
    <property type="project" value="InterPro"/>
</dbReference>
<dbReference type="GO" id="GO:0051781">
    <property type="term" value="P:positive regulation of cell division"/>
    <property type="evidence" value="ECO:0007669"/>
    <property type="project" value="UniProtKB-KW"/>
</dbReference>
<dbReference type="GO" id="GO:0046881">
    <property type="term" value="P:positive regulation of follicle-stimulating hormone secretion"/>
    <property type="evidence" value="ECO:0000270"/>
    <property type="project" value="AgBase"/>
</dbReference>
<dbReference type="GO" id="GO:0033686">
    <property type="term" value="P:positive regulation of luteinizing hormone secretion"/>
    <property type="evidence" value="ECO:0000270"/>
    <property type="project" value="AgBase"/>
</dbReference>
<dbReference type="GO" id="GO:0014008">
    <property type="term" value="P:positive regulation of microglia differentiation"/>
    <property type="evidence" value="ECO:0000250"/>
    <property type="project" value="UniProtKB"/>
</dbReference>
<dbReference type="GO" id="GO:0042327">
    <property type="term" value="P:positive regulation of phosphorylation"/>
    <property type="evidence" value="ECO:0000270"/>
    <property type="project" value="AgBase"/>
</dbReference>
<dbReference type="GO" id="GO:0042701">
    <property type="term" value="P:progesterone secretion"/>
    <property type="evidence" value="ECO:0000270"/>
    <property type="project" value="AgBase"/>
</dbReference>
<dbReference type="GO" id="GO:0042127">
    <property type="term" value="P:regulation of cell population proliferation"/>
    <property type="evidence" value="ECO:0000318"/>
    <property type="project" value="GO_Central"/>
</dbReference>
<dbReference type="GO" id="GO:0050708">
    <property type="term" value="P:regulation of protein secretion"/>
    <property type="evidence" value="ECO:0000270"/>
    <property type="project" value="AgBase"/>
</dbReference>
<dbReference type="GO" id="GO:0007179">
    <property type="term" value="P:transforming growth factor beta receptor signaling pathway"/>
    <property type="evidence" value="ECO:0000318"/>
    <property type="project" value="GO_Central"/>
</dbReference>
<dbReference type="CDD" id="cd19384">
    <property type="entry name" value="TGF_beta_TGFB1"/>
    <property type="match status" value="1"/>
</dbReference>
<dbReference type="FunFam" id="2.10.90.10:FF:000004">
    <property type="entry name" value="Transforming growth factor beta"/>
    <property type="match status" value="1"/>
</dbReference>
<dbReference type="FunFam" id="2.60.120.970:FF:000010">
    <property type="entry name" value="Transforming growth factor beta"/>
    <property type="match status" value="1"/>
</dbReference>
<dbReference type="Gene3D" id="2.60.120.970">
    <property type="match status" value="1"/>
</dbReference>
<dbReference type="Gene3D" id="2.10.90.10">
    <property type="entry name" value="Cystine-knot cytokines"/>
    <property type="match status" value="1"/>
</dbReference>
<dbReference type="InterPro" id="IPR029034">
    <property type="entry name" value="Cystine-knot_cytokine"/>
</dbReference>
<dbReference type="InterPro" id="IPR001839">
    <property type="entry name" value="TGF-b_C"/>
</dbReference>
<dbReference type="InterPro" id="IPR001111">
    <property type="entry name" value="TGF-b_propeptide"/>
</dbReference>
<dbReference type="InterPro" id="IPR016319">
    <property type="entry name" value="TGF-beta"/>
</dbReference>
<dbReference type="InterPro" id="IPR015615">
    <property type="entry name" value="TGF-beta-rel"/>
</dbReference>
<dbReference type="InterPro" id="IPR003939">
    <property type="entry name" value="TGFb1"/>
</dbReference>
<dbReference type="InterPro" id="IPR017948">
    <property type="entry name" value="TGFb_CS"/>
</dbReference>
<dbReference type="PANTHER" id="PTHR11848">
    <property type="entry name" value="TGF-BETA FAMILY"/>
    <property type="match status" value="1"/>
</dbReference>
<dbReference type="PANTHER" id="PTHR11848:SF125">
    <property type="entry name" value="TRANSFORMING GROWTH FACTOR BETA-1 PROPROTEIN"/>
    <property type="match status" value="1"/>
</dbReference>
<dbReference type="Pfam" id="PF00019">
    <property type="entry name" value="TGF_beta"/>
    <property type="match status" value="1"/>
</dbReference>
<dbReference type="Pfam" id="PF00688">
    <property type="entry name" value="TGFb_propeptide"/>
    <property type="match status" value="1"/>
</dbReference>
<dbReference type="PIRSF" id="PIRSF001787">
    <property type="entry name" value="TGF-beta"/>
    <property type="match status" value="1"/>
</dbReference>
<dbReference type="PRINTS" id="PR01423">
    <property type="entry name" value="TGFBETA"/>
</dbReference>
<dbReference type="PRINTS" id="PR01424">
    <property type="entry name" value="TGFBETA1"/>
</dbReference>
<dbReference type="SMART" id="SM00204">
    <property type="entry name" value="TGFB"/>
    <property type="match status" value="1"/>
</dbReference>
<dbReference type="SUPFAM" id="SSF57501">
    <property type="entry name" value="Cystine-knot cytokines"/>
    <property type="match status" value="1"/>
</dbReference>
<dbReference type="PROSITE" id="PS00250">
    <property type="entry name" value="TGF_BETA_1"/>
    <property type="match status" value="1"/>
</dbReference>
<dbReference type="PROSITE" id="PS51362">
    <property type="entry name" value="TGF_BETA_2"/>
    <property type="match status" value="1"/>
</dbReference>
<organism>
    <name type="scientific">Gallus gallus</name>
    <name type="common">Chicken</name>
    <dbReference type="NCBI Taxonomy" id="9031"/>
    <lineage>
        <taxon>Eukaryota</taxon>
        <taxon>Metazoa</taxon>
        <taxon>Chordata</taxon>
        <taxon>Craniata</taxon>
        <taxon>Vertebrata</taxon>
        <taxon>Euteleostomi</taxon>
        <taxon>Archelosauria</taxon>
        <taxon>Archosauria</taxon>
        <taxon>Dinosauria</taxon>
        <taxon>Saurischia</taxon>
        <taxon>Theropoda</taxon>
        <taxon>Coelurosauria</taxon>
        <taxon>Aves</taxon>
        <taxon>Neognathae</taxon>
        <taxon>Galloanserae</taxon>
        <taxon>Galliformes</taxon>
        <taxon>Phasianidae</taxon>
        <taxon>Phasianinae</taxon>
        <taxon>Gallus</taxon>
    </lineage>
</organism>
<sequence length="391" mass="44437">MDPSPLLALLLLLGAARALSTCQRLDLEAAKKKRIEAVRGQILSKLRLTAPPPASETPPRPLPDDVRALYNSTQELLKQRARLRPPPDGPDEYWAKELRRIPMETTWDGPMEHWQPQSHSIFFVFNVSRVRAEVGGRALLHRAELRMLRQKAAADSAGTEQRLELYQGYGNASWRYLHGRSVRATADDEWLSFDVTDAVHQWLSGSELLGVFKLSVHCPCEMGPGHADEMRISIEGFEQQRGDMQSIAKKHRRVPYVLAMALPAERANELHSARRRRDLDTDYCFGPGTDEKNCCVRPLYIDFRKDLQWKWIHEPKGYMANFCMGPCPYIWSADTQYTKVLALYNQHNPGASAAPCCVPQTLDPLPIIYYVGRNVRVEQLSNMVVRACKCS</sequence>
<gene>
    <name type="primary">TGFB1</name>
</gene>
<proteinExistence type="evidence at transcript level"/>
<name>TGFB1_CHICK</name>
<comment type="function">
    <text evidence="1">Transforming growth factor beta-1 proprotein: Precursor of the Latency-associated peptide (LAP) and Transforming growth factor beta-1 (TGF-beta-1) chains, which constitute the regulatory and active subunit of TGF-beta-1, respectively.</text>
</comment>
<comment type="function">
    <molecule>Latency-associated peptide</molecule>
    <text evidence="1">Required to maintain the Transforming growth factor beta-1 (TGF-beta-1) chain in a latent state during storage in extracellular matrix. Associates non-covalently with TGF-beta-1 and regulates its activation via interaction with 'milieu molecules', such as LTBP1, LRRC32/GARP and LRRC33/NRROS, that control activation of TGF-beta-1. Interaction with integrins (ITGAV:ITGB6 or ITGAV:ITGB8) results in distortion of the Latency-associated peptide chain and subsequent release of the active TGF-beta-1.</text>
</comment>
<comment type="function">
    <text evidence="1 2">Transforming growth factor beta-1: Multifunctional protein that regulates the growth and differentiation of various cell types and is involved in various processes, such as normal development, immune function, microglia function and responses to neurodegeneration (By similarity). Activation into mature form follows different steps: following cleavage of the proprotein in the Golgi apparatus, Latency-associated peptide (LAP) and Transforming growth factor beta-1 (TGF-beta-1) chains remain non-covalently linked rendering TGF-beta-1 inactive during storage in extracellular matrix. At the same time, LAP chain interacts with 'milieu molecules', such as LTBP1, LRRC32/GARP and LRRC33/NRROS that control activation of TGF-beta-1 and maintain it in a latent state during storage in extracellular milieus. TGF-beta-1 is released from LAP by integrins (ITGAV:ITGB6 or ITGAV:ITGB8): integrin-binding to LAP stabilizes an alternative conformation of the LAP bowtie tail and results in distortion of the LAP chain and subsequent release of the active TGF-beta-1. Once activated following release of LAP, TGF-beta-1 acts by binding to TGF-beta receptors (TGFBR1 and TGFBR2), which transduce signal (By similarity). While expressed by many cells types, TGF-beta-1 only has a very localized range of action within cell environment thanks to fine regulation of its activation by Latency-associated peptide chain (LAP) and 'milieu molecules'. Plays an important role in bone remodeling: acts as a potent stimulator of osteoblastic bone formation. Can promote either T-helper 17 cells (Th17) or regulatory T-cells (Treg) lineage differentiation in a concentration-dependent manner (By similarity). Can induce epithelial-to-mesenchymal transition (EMT) and cell migration in various cell types (By similarity).</text>
</comment>
<comment type="subunit">
    <text evidence="1">Latency-associated peptide: Homodimer; disulfide-linked. Latency-associated peptide: Interacts with Transforming growth factor beta-1 (TGF-beta-1) chain; interaction is non-covalent and maintains (TGF-beta-1) in a latent state; each Latency-associated peptide (LAP) monomer interacts with TGF-beta-1 in the other monomer. Transforming growth factor beta-1: Homodimer; disulfide-linked. Transforming growth factor beta-1: Interacts with TGF-beta receptors (TGFBR1 and TGFBR2), leading to signal transduction.</text>
</comment>
<comment type="subcellular location">
    <molecule>Latency-associated peptide</molecule>
    <subcellularLocation>
        <location evidence="1">Secreted</location>
        <location evidence="1">Extracellular space</location>
        <location evidence="1">Extracellular matrix</location>
    </subcellularLocation>
</comment>
<comment type="subcellular location">
    <molecule>Transforming growth factor beta-1</molecule>
    <subcellularLocation>
        <location evidence="1">Secreted</location>
    </subcellularLocation>
</comment>
<comment type="domain">
    <molecule>Latency-associated peptide</molecule>
    <text evidence="3">The 'straitjacket' and 'arm' domains encircle the Transforming growth factor beta-1 (TGF-beta-1) monomers and are fastened together by strong bonding between Lys-45 and Tyr-93/Trp-94.</text>
</comment>
<comment type="domain">
    <molecule>Latency-associated peptide</molecule>
    <text evidence="1">The cell attachment site motif mediates binding to integrins (ITGAV:ITGB6 or ITGAV:ITGB8). The motif locates to a long loop in the arm domain called the bowtie tail. Integrin-binding stabilizes an alternative conformation of the bowtie tail. Activation by integrin requires force application by the actin cytoskeleton, which is resisted by the 'milieu molecules' (such as LTBP1, LRRC32/GARP and/or LRRC33/NRROS), resulting in distortion of the prodomain and release of the active TGF-beta-1.</text>
</comment>
<comment type="PTM">
    <text evidence="1">Transforming growth factor beta-1 proprotein: The precursor proprotein is cleaved in the Golgi apparatus to form Transforming growth factor beta-1 (TGF-beta-1) and Latency-associated peptide (LAP) chains, which remain non-covalently linked, rendering TGF-beta-1 inactive.</text>
</comment>
<comment type="similarity">
    <text evidence="5">Belongs to the TGF-beta family.</text>
</comment>
<keyword id="KW-0165">Cleavage on pair of basic residues</keyword>
<keyword id="KW-1015">Disulfide bond</keyword>
<keyword id="KW-0272">Extracellular matrix</keyword>
<keyword id="KW-0325">Glycoprotein</keyword>
<keyword id="KW-0339">Growth factor</keyword>
<keyword id="KW-0497">Mitogen</keyword>
<keyword id="KW-1185">Reference proteome</keyword>
<keyword id="KW-0964">Secreted</keyword>
<keyword id="KW-0732">Signal</keyword>
<accession>P09531</accession>
<accession>A0A1D5PM67</accession>
<protein>
    <recommendedName>
        <fullName>Transforming growth factor beta-1 proprotein</fullName>
    </recommendedName>
    <component>
        <recommendedName>
            <fullName>Latency-associated peptide</fullName>
            <shortName>LAP</shortName>
        </recommendedName>
    </component>
    <component>
        <recommendedName>
            <fullName>Transforming growth factor beta-1</fullName>
            <shortName>TGF-beta-1</shortName>
        </recommendedName>
    </component>
</protein>